<evidence type="ECO:0000250" key="1">
    <source>
        <dbReference type="UniProtKB" id="Q06830"/>
    </source>
</evidence>
<evidence type="ECO:0000255" key="2">
    <source>
        <dbReference type="PROSITE-ProRule" id="PRU00691"/>
    </source>
</evidence>
<evidence type="ECO:0000269" key="3">
    <source>
    </source>
</evidence>
<evidence type="ECO:0000305" key="4"/>
<feature type="chain" id="PRO_0000383334" description="Putative thioredoxin peroxidase">
    <location>
        <begin position="1"/>
        <end position="177"/>
    </location>
</feature>
<feature type="domain" description="Thioredoxin" evidence="2">
    <location>
        <begin position="1"/>
        <end position="158"/>
    </location>
</feature>
<feature type="active site" description="Cysteine sulfenic acid (-SOH) intermediate" evidence="1">
    <location>
        <position position="45"/>
    </location>
</feature>
<feature type="disulfide bond" description="Interchain (with C-166); in linked form" evidence="1">
    <location>
        <position position="45"/>
    </location>
</feature>
<feature type="disulfide bond" description="Interchain (with C-45); in linked form" evidence="1">
    <location>
        <position position="166"/>
    </location>
</feature>
<organism>
    <name type="scientific">Encephalitozoon cuniculi (strain GB-M1)</name>
    <name type="common">Microsporidian parasite</name>
    <dbReference type="NCBI Taxonomy" id="284813"/>
    <lineage>
        <taxon>Eukaryota</taxon>
        <taxon>Fungi</taxon>
        <taxon>Fungi incertae sedis</taxon>
        <taxon>Microsporidia</taxon>
        <taxon>Unikaryonidae</taxon>
        <taxon>Encephalitozoon</taxon>
    </lineage>
</organism>
<comment type="function">
    <text evidence="1">Thiol-specific peroxidase that catalyzes the reduction of hydrogen peroxide and organic hydroperoxides to water and alcohols, respectively. Plays a role in cell protection against oxidative stress by detoxifying peroxides and as sensor of hydrogen peroxide-mediated signaling events.</text>
</comment>
<comment type="catalytic activity">
    <reaction evidence="1">
        <text>a hydroperoxide + [thioredoxin]-dithiol = an alcohol + [thioredoxin]-disulfide + H2O</text>
        <dbReference type="Rhea" id="RHEA:62620"/>
        <dbReference type="Rhea" id="RHEA-COMP:10698"/>
        <dbReference type="Rhea" id="RHEA-COMP:10700"/>
        <dbReference type="ChEBI" id="CHEBI:15377"/>
        <dbReference type="ChEBI" id="CHEBI:29950"/>
        <dbReference type="ChEBI" id="CHEBI:30879"/>
        <dbReference type="ChEBI" id="CHEBI:35924"/>
        <dbReference type="ChEBI" id="CHEBI:50058"/>
        <dbReference type="EC" id="1.11.1.24"/>
    </reaction>
</comment>
<comment type="subunit">
    <text evidence="1">Homodimer; disulfide-linked, upon oxidation.</text>
</comment>
<comment type="developmental stage">
    <text evidence="3">Expressed in late sporogonial stages.</text>
</comment>
<comment type="miscellaneous">
    <text evidence="1">The active site is a conserved redox-active cysteine residue, the peroxidatic cysteine (C(P)), which makes the nucleophilic attack on the peroxide substrate. The peroxide oxidizes the C(P)-SH to cysteine sulfenic acid (C(P)-SOH), which then reacts with another cysteine residue, the resolving cysteine (C(R)), to form a disulfide bridge. The disulfide is subsequently reduced by an appropriate electron donor to complete the catalytic cycle. In this typical 2-Cys peroxiredoxin, C(R) is provided by the other dimeric subunit to form an intersubunit disulfide. The disulfide is subsequently reduced by thioredoxin.</text>
</comment>
<comment type="similarity">
    <text evidence="4">Belongs to the peroxiredoxin family. AhpC/Prx1 subfamily.</text>
</comment>
<proteinExistence type="evidence at protein level"/>
<keyword id="KW-0049">Antioxidant</keyword>
<keyword id="KW-1015">Disulfide bond</keyword>
<keyword id="KW-0560">Oxidoreductase</keyword>
<keyword id="KW-0575">Peroxidase</keyword>
<keyword id="KW-0676">Redox-active center</keyword>
<keyword id="KW-1185">Reference proteome</keyword>
<sequence length="177" mass="20243">MFPKTLTDSKYKAFVDGEIKEISLQDYIGKYVVLAFYPLDFTFVCPTEINRFSDLKGAFLRRNAVVLLISCDSVYTHKAWASIPREQNGVLGTAWPMVWDAKRELCNQFGLYDEENGHPMRSTVILAKDLSVRHISSNYHAIGRSVDEIIRLIDAITFNDENGDICPAEWRSENKDN</sequence>
<accession>Q8SS85</accession>
<protein>
    <recommendedName>
        <fullName>Putative thioredoxin peroxidase</fullName>
        <ecNumber evidence="1">1.11.1.24</ecNumber>
    </recommendedName>
    <alternativeName>
        <fullName>Peroxiredoxin</fullName>
    </alternativeName>
    <alternativeName>
        <fullName>Thioredoxin-dependent peroxide reductase</fullName>
    </alternativeName>
    <alternativeName>
        <fullName evidence="4">Thioredoxin-dependent peroxiredoxin</fullName>
    </alternativeName>
</protein>
<name>TDX_ENCCU</name>
<gene>
    <name type="ordered locus">ECU03_1190</name>
</gene>
<reference key="1">
    <citation type="journal article" date="2001" name="Nature">
        <title>Genome sequence and gene compaction of the eukaryote parasite Encephalitozoon cuniculi.</title>
        <authorList>
            <person name="Katinka M.D."/>
            <person name="Duprat S."/>
            <person name="Cornillot E."/>
            <person name="Metenier G."/>
            <person name="Thomarat F."/>
            <person name="Prensier G."/>
            <person name="Barbe V."/>
            <person name="Peyretaillade E."/>
            <person name="Brottier P."/>
            <person name="Wincker P."/>
            <person name="Delbac F."/>
            <person name="El Alaoui H."/>
            <person name="Peyret P."/>
            <person name="Saurin W."/>
            <person name="Gouy M."/>
            <person name="Weissenbach J."/>
            <person name="Vivares C.P."/>
        </authorList>
    </citation>
    <scope>NUCLEOTIDE SEQUENCE [LARGE SCALE GENOMIC DNA]</scope>
    <source>
        <strain>GB-M1</strain>
    </source>
</reference>
<reference key="2">
    <citation type="journal article" date="2006" name="Proteomics">
        <title>Proteomic analysis of the eukaryotic parasite Encephalitozoon cuniculi (microsporidia): a reference map for proteins expressed in late sporogonial stages.</title>
        <authorList>
            <person name="Brosson D."/>
            <person name="Kuhn L."/>
            <person name="Delbac F."/>
            <person name="Garin J."/>
            <person name="Vivares C.P."/>
            <person name="Texier C."/>
        </authorList>
    </citation>
    <scope>IDENTIFICATION BY MASS SPECTROMETRY [LARGE SCALE ANALYSIS]</scope>
    <scope>DEVELOPMENTAL STAGE</scope>
    <scope>SUBCELLULAR LOCATION</scope>
</reference>
<dbReference type="EC" id="1.11.1.24" evidence="1"/>
<dbReference type="EMBL" id="AL590443">
    <property type="protein sequence ID" value="CAD26263.1"/>
    <property type="molecule type" value="Genomic_DNA"/>
</dbReference>
<dbReference type="RefSeq" id="NP_597628.1">
    <property type="nucleotide sequence ID" value="NM_001040992.1"/>
</dbReference>
<dbReference type="SMR" id="Q8SS85"/>
<dbReference type="FunCoup" id="Q8SS85">
    <property type="interactions" value="160"/>
</dbReference>
<dbReference type="STRING" id="284813.Q8SS85"/>
<dbReference type="PeroxiBase" id="5977">
    <property type="entry name" value="Ecu2CysPrx"/>
</dbReference>
<dbReference type="GeneID" id="858790"/>
<dbReference type="KEGG" id="ecu:ECU03_1190"/>
<dbReference type="VEuPathDB" id="MicrosporidiaDB:ECU03_1190"/>
<dbReference type="HOGENOM" id="CLU_042529_21_3_1"/>
<dbReference type="InParanoid" id="Q8SS85"/>
<dbReference type="OMA" id="NNFGVMR"/>
<dbReference type="OrthoDB" id="185659at2759"/>
<dbReference type="Proteomes" id="UP000000819">
    <property type="component" value="Chromosome III"/>
</dbReference>
<dbReference type="GO" id="GO:0005829">
    <property type="term" value="C:cytosol"/>
    <property type="evidence" value="ECO:0007669"/>
    <property type="project" value="TreeGrafter"/>
</dbReference>
<dbReference type="GO" id="GO:0008379">
    <property type="term" value="F:thioredoxin peroxidase activity"/>
    <property type="evidence" value="ECO:0007669"/>
    <property type="project" value="TreeGrafter"/>
</dbReference>
<dbReference type="GO" id="GO:0045454">
    <property type="term" value="P:cell redox homeostasis"/>
    <property type="evidence" value="ECO:0007669"/>
    <property type="project" value="TreeGrafter"/>
</dbReference>
<dbReference type="GO" id="GO:0033554">
    <property type="term" value="P:cellular response to stress"/>
    <property type="evidence" value="ECO:0007669"/>
    <property type="project" value="TreeGrafter"/>
</dbReference>
<dbReference type="GO" id="GO:0042744">
    <property type="term" value="P:hydrogen peroxide catabolic process"/>
    <property type="evidence" value="ECO:0007669"/>
    <property type="project" value="TreeGrafter"/>
</dbReference>
<dbReference type="GO" id="GO:0006979">
    <property type="term" value="P:response to oxidative stress"/>
    <property type="evidence" value="ECO:0007669"/>
    <property type="project" value="TreeGrafter"/>
</dbReference>
<dbReference type="CDD" id="cd03015">
    <property type="entry name" value="PRX_Typ2cys"/>
    <property type="match status" value="1"/>
</dbReference>
<dbReference type="Gene3D" id="3.40.30.10">
    <property type="entry name" value="Glutaredoxin"/>
    <property type="match status" value="1"/>
</dbReference>
<dbReference type="InterPro" id="IPR000866">
    <property type="entry name" value="AhpC/TSA"/>
</dbReference>
<dbReference type="InterPro" id="IPR050217">
    <property type="entry name" value="Peroxiredoxin"/>
</dbReference>
<dbReference type="InterPro" id="IPR024706">
    <property type="entry name" value="Peroxiredoxin_AhpC-typ"/>
</dbReference>
<dbReference type="InterPro" id="IPR036249">
    <property type="entry name" value="Thioredoxin-like_sf"/>
</dbReference>
<dbReference type="InterPro" id="IPR013766">
    <property type="entry name" value="Thioredoxin_domain"/>
</dbReference>
<dbReference type="PANTHER" id="PTHR10681">
    <property type="entry name" value="THIOREDOXIN PEROXIDASE"/>
    <property type="match status" value="1"/>
</dbReference>
<dbReference type="PANTHER" id="PTHR10681:SF128">
    <property type="entry name" value="THIOREDOXIN-DEPENDENT PEROXIDE REDUCTASE, MITOCHONDRIAL"/>
    <property type="match status" value="1"/>
</dbReference>
<dbReference type="Pfam" id="PF00578">
    <property type="entry name" value="AhpC-TSA"/>
    <property type="match status" value="1"/>
</dbReference>
<dbReference type="PIRSF" id="PIRSF000239">
    <property type="entry name" value="AHPC"/>
    <property type="match status" value="1"/>
</dbReference>
<dbReference type="SUPFAM" id="SSF52833">
    <property type="entry name" value="Thioredoxin-like"/>
    <property type="match status" value="1"/>
</dbReference>
<dbReference type="PROSITE" id="PS51352">
    <property type="entry name" value="THIOREDOXIN_2"/>
    <property type="match status" value="1"/>
</dbReference>